<organism>
    <name type="scientific">Homo sapiens</name>
    <name type="common">Human</name>
    <dbReference type="NCBI Taxonomy" id="9606"/>
    <lineage>
        <taxon>Eukaryota</taxon>
        <taxon>Metazoa</taxon>
        <taxon>Chordata</taxon>
        <taxon>Craniata</taxon>
        <taxon>Vertebrata</taxon>
        <taxon>Euteleostomi</taxon>
        <taxon>Mammalia</taxon>
        <taxon>Eutheria</taxon>
        <taxon>Euarchontoglires</taxon>
        <taxon>Primates</taxon>
        <taxon>Haplorrhini</taxon>
        <taxon>Catarrhini</taxon>
        <taxon>Hominidae</taxon>
        <taxon>Homo</taxon>
    </lineage>
</organism>
<keyword id="KW-0002">3D-structure</keyword>
<keyword id="KW-0007">Acetylation</keyword>
<keyword id="KW-0025">Alternative splicing</keyword>
<keyword id="KW-0903">Direct protein sequencing</keyword>
<keyword id="KW-0225">Disease variant</keyword>
<keyword id="KW-0507">mRNA processing</keyword>
<keyword id="KW-0508">mRNA splicing</keyword>
<keyword id="KW-0539">Nucleus</keyword>
<keyword id="KW-1267">Proteomics identification</keyword>
<keyword id="KW-1185">Reference proteome</keyword>
<keyword id="KW-0677">Repeat</keyword>
<keyword id="KW-0682">Retinitis pigmentosa</keyword>
<keyword id="KW-0747">Spliceosome</keyword>
<keyword id="KW-0853">WD repeat</keyword>
<proteinExistence type="evidence at protein level"/>
<sequence length="522" mass="58449">MASSRASSTQATKTKAPDDLVAPVVKKPHIYYGSLEEKERERLAKGESGILGKDGLKAGIEAGNINITSGEVFEIEEHISERQAEVLAEFERRKRARQINVSTDDSEVKACLRALGEPITLFGEGPAERRERLRNILSVVGTDALKKTKKDDEKSKKSKEEYQQTWYHEGPNSLKVARLWIANYSLPRAMKRLEEARLHKEIPETTRTSQMQELHKSLRSLNNFCSQIGDDRPISYCHFSPNSKMLATACWSGLCKLWSVPDCNLLHTLRGHNTNVGAIVFHPKSTVSLDPKDVNLASCAADGSVKLWSLDSDEPVADIEGHTVRVARVMWHPSGRFLGTTCYDRSWRLWDLEAQEEILHQEGHSMGVYDIAFHQDGSLAGTGGLDAFGRVWDLRTGRCIMFLEGHLKEIYGINFSPNGYHIATGSGDNTCKVWDLRQRRCVYTIPAHQNLVTGVKFEPIHGNFLLTGAYDNTAKIWTHPGWSPLKTLAGHEGKVMGLDISSDGQLIATCSYDRTFKLWMAE</sequence>
<accession>O43172</accession>
<accession>O43445</accession>
<accession>O43864</accession>
<accession>Q5T1M8</accession>
<accession>Q96DG2</accession>
<accession>Q96IK4</accession>
<comment type="function">
    <text evidence="5 8">Plays a role in pre-mRNA splicing as component of the U4/U6-U5 tri-snRNP complex that is involved in spliceosome assembly, and as component of the precatalytic spliceosome (spliceosome B complex).</text>
</comment>
<comment type="subunit">
    <text evidence="2 3 5 6 7 8 9 10 11 12">Component of the precatalytic spliceosome (spliceosome B complex) (PubMed:28781166). Component of the U4/U6-U5 tri-snRNP complex, a building block of the precatalytic spliceosome (spliceosome B complex) (PubMed:26912367, PubMed:28781166, PubMed:9257651, PubMed:9328476, PubMed:9404889). The U4/U6-U5 tri-snRNP complex is composed of the U4, U6 and U5 snRNAs and at least PRPF3, PRPF4, PRPF6, PRPF8, PRPF31, SNRNP200, TXNL4A, SNRNP40, SNRPB, SNRPD1, SNRPD2, SNRPD3, SNRPE, SNRPF, SNRPG, DDX23, CD2BP2, PPIH, SNU13, EFTUD2, SART1 and USP39, plus LSM2, LSM3, LSM4, LSM5, LSM6, LSM7 and LSM8 (PubMed:16723661, PubMed:26912367). Interacts directly with PRPF18, PPIH and PRPF3 (PubMed:12875835, PubMed:25383878, PubMed:9000057, PubMed:9328476, PubMed:9404889). Part of a heteromeric complex containing PPIH, PRPF3 and PRPF4 that is stable in the absence of RNA (PubMed:9404889). Interacts with ERCC6 (PubMed:26030138).</text>
</comment>
<comment type="interaction">
    <interactant intactId="EBI-718395">
        <id>O43172</id>
    </interactant>
    <interactant intactId="EBI-746309">
        <id>Q92917</id>
        <label>GPKOW</label>
    </interactant>
    <organismsDiffer>false</organismsDiffer>
    <experiments>2</experiments>
</comment>
<comment type="interaction">
    <interactant intactId="EBI-718395">
        <id>O43172</id>
    </interactant>
    <interactant intactId="EBI-1055615">
        <id>O43447</id>
        <label>PPIH</label>
    </interactant>
    <organismsDiffer>false</organismsDiffer>
    <experiments>6</experiments>
</comment>
<comment type="subcellular location">
    <subcellularLocation>
        <location evidence="5 7 8 10 11 12">Nucleus</location>
    </subcellularLocation>
    <subcellularLocation>
        <location evidence="15">Nucleus speckle</location>
    </subcellularLocation>
</comment>
<comment type="alternative products">
    <event type="alternative splicing"/>
    <isoform>
        <id>O43172-1</id>
        <name>1</name>
        <sequence type="displayed"/>
    </isoform>
    <isoform>
        <id>O43172-2</id>
        <name>2</name>
        <sequence type="described" ref="VSP_006785"/>
    </isoform>
</comment>
<comment type="disease" evidence="4 5">
    <disease id="DI-04177">
        <name>Retinitis pigmentosa 70</name>
        <acronym>RP70</acronym>
        <description>A retinal dystrophy belonging to the group of pigmentary retinopathies. Retinitis pigmentosa is characterized by retinal pigment deposits visible on fundus examination and primary loss of rod photoreceptor cells followed by secondary loss of cone photoreceptors. Patients typically have night vision blindness and loss of midperipheral visual field. As their condition progresses, they lose their far peripheral visual field and eventually central vision as well.</description>
        <dbReference type="MIM" id="615922"/>
    </disease>
    <text>The disease is caused by variants affecting the gene represented in this entry.</text>
</comment>
<name>PRP4_HUMAN</name>
<gene>
    <name type="primary">PRPF4</name>
    <name type="synonym">PRP4</name>
</gene>
<reference key="1">
    <citation type="journal article" date="1997" name="RNA">
        <title>The human U4/U6 snRNP contains 60 and 90kD proteins that are structurally homologous to the yeast splicing factors Prp4p and Prp3p.</title>
        <authorList>
            <person name="Lauber J."/>
            <person name="Plessel G."/>
            <person name="Prehn S."/>
            <person name="Will C.L."/>
            <person name="Fabrizio P."/>
            <person name="Groning K."/>
            <person name="Lane W.S."/>
            <person name="Luehrmann R."/>
        </authorList>
    </citation>
    <scope>NUCLEOTIDE SEQUENCE [GENOMIC DNA] (ISOFORM 2)</scope>
    <scope>SUBUNIT</scope>
    <scope>SUBCELLULAR LOCATION</scope>
</reference>
<reference key="2">
    <citation type="journal article" date="1997" name="RNA">
        <title>A new cyclophilin and the human homologues of yeast Prp3 and Prp4 form a complex associated with U4/U6 snRNPs.</title>
        <authorList>
            <person name="Horowitz D.S."/>
            <person name="Kobayashi R."/>
            <person name="Krainer A.R."/>
        </authorList>
    </citation>
    <scope>NUCLEOTIDE SEQUENCE [MRNA] (ISOFORM 1)</scope>
    <scope>PROTEIN SEQUENCE OF 28-38; 58-85; 95-106; 193-200 AND 457-472</scope>
    <scope>INTERACTION WITH U4/U5/U6 SNRNPS</scope>
    <scope>SUBUNIT</scope>
    <scope>SUBCELLULAR LOCATION</scope>
</reference>
<reference key="3">
    <citation type="journal article" date="1997" name="Hum. Mol. Genet.">
        <title>Identification and characterization of human genes encoding Hprp3p and Hprp4p, interacting components of the spliceosome.</title>
        <authorList>
            <person name="Wang A."/>
            <person name="Forman-Kay J."/>
            <person name="Luo Y."/>
            <person name="Luo M."/>
            <person name="Chow Y.-H."/>
            <person name="Plumb J."/>
            <person name="Friesen J.D."/>
            <person name="Tsui L.-C."/>
            <person name="Heng H.H.Q."/>
            <person name="Woolford J.L. Jr."/>
            <person name="Hu J."/>
        </authorList>
    </citation>
    <scope>NUCLEOTIDE SEQUENCE [MRNA] (ISOFORM 2)</scope>
    <scope>INTERACTION WITH PRPF3 AND U4/U5/U6 SNRNPS</scope>
    <scope>SUBCELLULAR LOCATION</scope>
</reference>
<reference key="4">
    <citation type="journal article" date="2004" name="Nature">
        <title>DNA sequence and analysis of human chromosome 9.</title>
        <authorList>
            <person name="Humphray S.J."/>
            <person name="Oliver K."/>
            <person name="Hunt A.R."/>
            <person name="Plumb R.W."/>
            <person name="Loveland J.E."/>
            <person name="Howe K.L."/>
            <person name="Andrews T.D."/>
            <person name="Searle S."/>
            <person name="Hunt S.E."/>
            <person name="Scott C.E."/>
            <person name="Jones M.C."/>
            <person name="Ainscough R."/>
            <person name="Almeida J.P."/>
            <person name="Ambrose K.D."/>
            <person name="Ashwell R.I.S."/>
            <person name="Babbage A.K."/>
            <person name="Babbage S."/>
            <person name="Bagguley C.L."/>
            <person name="Bailey J."/>
            <person name="Banerjee R."/>
            <person name="Barker D.J."/>
            <person name="Barlow K.F."/>
            <person name="Bates K."/>
            <person name="Beasley H."/>
            <person name="Beasley O."/>
            <person name="Bird C.P."/>
            <person name="Bray-Allen S."/>
            <person name="Brown A.J."/>
            <person name="Brown J.Y."/>
            <person name="Burford D."/>
            <person name="Burrill W."/>
            <person name="Burton J."/>
            <person name="Carder C."/>
            <person name="Carter N.P."/>
            <person name="Chapman J.C."/>
            <person name="Chen Y."/>
            <person name="Clarke G."/>
            <person name="Clark S.Y."/>
            <person name="Clee C.M."/>
            <person name="Clegg S."/>
            <person name="Collier R.E."/>
            <person name="Corby N."/>
            <person name="Crosier M."/>
            <person name="Cummings A.T."/>
            <person name="Davies J."/>
            <person name="Dhami P."/>
            <person name="Dunn M."/>
            <person name="Dutta I."/>
            <person name="Dyer L.W."/>
            <person name="Earthrowl M.E."/>
            <person name="Faulkner L."/>
            <person name="Fleming C.J."/>
            <person name="Frankish A."/>
            <person name="Frankland J.A."/>
            <person name="French L."/>
            <person name="Fricker D.G."/>
            <person name="Garner P."/>
            <person name="Garnett J."/>
            <person name="Ghori J."/>
            <person name="Gilbert J.G.R."/>
            <person name="Glison C."/>
            <person name="Grafham D.V."/>
            <person name="Gribble S."/>
            <person name="Griffiths C."/>
            <person name="Griffiths-Jones S."/>
            <person name="Grocock R."/>
            <person name="Guy J."/>
            <person name="Hall R.E."/>
            <person name="Hammond S."/>
            <person name="Harley J.L."/>
            <person name="Harrison E.S.I."/>
            <person name="Hart E.A."/>
            <person name="Heath P.D."/>
            <person name="Henderson C.D."/>
            <person name="Hopkins B.L."/>
            <person name="Howard P.J."/>
            <person name="Howden P.J."/>
            <person name="Huckle E."/>
            <person name="Johnson C."/>
            <person name="Johnson D."/>
            <person name="Joy A.A."/>
            <person name="Kay M."/>
            <person name="Keenan S."/>
            <person name="Kershaw J.K."/>
            <person name="Kimberley A.M."/>
            <person name="King A."/>
            <person name="Knights A."/>
            <person name="Laird G.K."/>
            <person name="Langford C."/>
            <person name="Lawlor S."/>
            <person name="Leongamornlert D.A."/>
            <person name="Leversha M."/>
            <person name="Lloyd C."/>
            <person name="Lloyd D.M."/>
            <person name="Lovell J."/>
            <person name="Martin S."/>
            <person name="Mashreghi-Mohammadi M."/>
            <person name="Matthews L."/>
            <person name="McLaren S."/>
            <person name="McLay K.E."/>
            <person name="McMurray A."/>
            <person name="Milne S."/>
            <person name="Nickerson T."/>
            <person name="Nisbett J."/>
            <person name="Nordsiek G."/>
            <person name="Pearce A.V."/>
            <person name="Peck A.I."/>
            <person name="Porter K.M."/>
            <person name="Pandian R."/>
            <person name="Pelan S."/>
            <person name="Phillimore B."/>
            <person name="Povey S."/>
            <person name="Ramsey Y."/>
            <person name="Rand V."/>
            <person name="Scharfe M."/>
            <person name="Sehra H.K."/>
            <person name="Shownkeen R."/>
            <person name="Sims S.K."/>
            <person name="Skuce C.D."/>
            <person name="Smith M."/>
            <person name="Steward C.A."/>
            <person name="Swarbreck D."/>
            <person name="Sycamore N."/>
            <person name="Tester J."/>
            <person name="Thorpe A."/>
            <person name="Tracey A."/>
            <person name="Tromans A."/>
            <person name="Thomas D.W."/>
            <person name="Wall M."/>
            <person name="Wallis J.M."/>
            <person name="West A.P."/>
            <person name="Whitehead S.L."/>
            <person name="Willey D.L."/>
            <person name="Williams S.A."/>
            <person name="Wilming L."/>
            <person name="Wray P.W."/>
            <person name="Young L."/>
            <person name="Ashurst J.L."/>
            <person name="Coulson A."/>
            <person name="Blocker H."/>
            <person name="Durbin R.M."/>
            <person name="Sulston J.E."/>
            <person name="Hubbard T."/>
            <person name="Jackson M.J."/>
            <person name="Bentley D.R."/>
            <person name="Beck S."/>
            <person name="Rogers J."/>
            <person name="Dunham I."/>
        </authorList>
    </citation>
    <scope>NUCLEOTIDE SEQUENCE [LARGE SCALE GENOMIC DNA]</scope>
</reference>
<reference key="5">
    <citation type="submission" date="2005-07" db="EMBL/GenBank/DDBJ databases">
        <authorList>
            <person name="Mural R.J."/>
            <person name="Istrail S."/>
            <person name="Sutton G.G."/>
            <person name="Florea L."/>
            <person name="Halpern A.L."/>
            <person name="Mobarry C.M."/>
            <person name="Lippert R."/>
            <person name="Walenz B."/>
            <person name="Shatkay H."/>
            <person name="Dew I."/>
            <person name="Miller J.R."/>
            <person name="Flanigan M.J."/>
            <person name="Edwards N.J."/>
            <person name="Bolanos R."/>
            <person name="Fasulo D."/>
            <person name="Halldorsson B.V."/>
            <person name="Hannenhalli S."/>
            <person name="Turner R."/>
            <person name="Yooseph S."/>
            <person name="Lu F."/>
            <person name="Nusskern D.R."/>
            <person name="Shue B.C."/>
            <person name="Zheng X.H."/>
            <person name="Zhong F."/>
            <person name="Delcher A.L."/>
            <person name="Huson D.H."/>
            <person name="Kravitz S.A."/>
            <person name="Mouchard L."/>
            <person name="Reinert K."/>
            <person name="Remington K.A."/>
            <person name="Clark A.G."/>
            <person name="Waterman M.S."/>
            <person name="Eichler E.E."/>
            <person name="Adams M.D."/>
            <person name="Hunkapiller M.W."/>
            <person name="Myers E.W."/>
            <person name="Venter J.C."/>
        </authorList>
    </citation>
    <scope>NUCLEOTIDE SEQUENCE [LARGE SCALE GENOMIC DNA]</scope>
</reference>
<reference key="6">
    <citation type="journal article" date="2004" name="Genome Res.">
        <title>The status, quality, and expansion of the NIH full-length cDNA project: the Mammalian Gene Collection (MGC).</title>
        <authorList>
            <consortium name="The MGC Project Team"/>
        </authorList>
    </citation>
    <scope>NUCLEOTIDE SEQUENCE [LARGE SCALE MRNA] (ISOFORMS 1 AND 2)</scope>
    <source>
        <tissue>Colon</tissue>
        <tissue>Ovary</tissue>
    </source>
</reference>
<reference key="7">
    <citation type="journal article" date="1997" name="Genes Dev.">
        <title>A human protein required for the second step of pre-mRNA splicing is functionally related to a yeast splicing factor.</title>
        <authorList>
            <person name="Horowitz D.S."/>
            <person name="Krainer A.R."/>
        </authorList>
    </citation>
    <scope>INTERACTION WITH PRPF18</scope>
</reference>
<reference key="8">
    <citation type="journal article" date="2006" name="RNA">
        <title>The network of protein-protein interactions within the human U4/U6.U5 tri-snRNP.</title>
        <authorList>
            <person name="Liu S."/>
            <person name="Rauhut R."/>
            <person name="Vornlocher H.-P."/>
            <person name="Luehrmann R."/>
        </authorList>
    </citation>
    <scope>SUBUNIT</scope>
</reference>
<reference key="9">
    <citation type="journal article" date="2009" name="Science">
        <title>Lysine acetylation targets protein complexes and co-regulates major cellular functions.</title>
        <authorList>
            <person name="Choudhary C."/>
            <person name="Kumar C."/>
            <person name="Gnad F."/>
            <person name="Nielsen M.L."/>
            <person name="Rehman M."/>
            <person name="Walther T.C."/>
            <person name="Olsen J.V."/>
            <person name="Mann M."/>
        </authorList>
    </citation>
    <scope>ACETYLATION [LARGE SCALE ANALYSIS] AT LYS-27</scope>
    <scope>IDENTIFICATION BY MASS SPECTROMETRY [LARGE SCALE ANALYSIS]</scope>
</reference>
<reference key="10">
    <citation type="journal article" date="2011" name="BMC Syst. Biol.">
        <title>Initial characterization of the human central proteome.</title>
        <authorList>
            <person name="Burkard T.R."/>
            <person name="Planyavsky M."/>
            <person name="Kaupe I."/>
            <person name="Breitwieser F.P."/>
            <person name="Buerckstuemmer T."/>
            <person name="Bennett K.L."/>
            <person name="Superti-Furga G."/>
            <person name="Colinge J."/>
        </authorList>
    </citation>
    <scope>IDENTIFICATION BY MASS SPECTROMETRY [LARGE SCALE ANALYSIS]</scope>
</reference>
<reference key="11">
    <citation type="journal article" date="2015" name="PLoS ONE">
        <title>Identification of Novel Proteins Co-Purifying with Cockayne Syndrome Group B (CSB) Reveals Potential Roles for CSB in RNA Metabolism and Chromatin Dynamics.</title>
        <authorList>
            <person name="Nicolai S."/>
            <person name="Filippi S."/>
            <person name="Caputo M."/>
            <person name="Cipak L."/>
            <person name="Gregan J."/>
            <person name="Ammerer G."/>
            <person name="Frontini M."/>
            <person name="Willems D."/>
            <person name="Prantera G."/>
            <person name="Balajee A.S."/>
            <person name="Proietti-De-Santis L."/>
        </authorList>
    </citation>
    <scope>INTERACTION WITH ERCC6</scope>
</reference>
<reference key="12">
    <citation type="journal article" date="2003" name="J. Mol. Biol.">
        <title>Crystal structure of a complex between human spliceosomal cyclophilin H and a U4/U6 snRNP-60K peptide.</title>
        <authorList>
            <person name="Reidt U."/>
            <person name="Wahl M.C."/>
            <person name="Fasshauer D."/>
            <person name="Horowitz D.S."/>
            <person name="Luehrmann R."/>
            <person name="Ficner R."/>
        </authorList>
    </citation>
    <scope>X-RAY CRYSTALLOGRAPHY (2.0 ANGSTROMS) OF 107-137 IN COMPLEX WITH PPIH</scope>
</reference>
<reference evidence="16" key="13">
    <citation type="journal article" date="2016" name="Science">
        <title>Molecular architecture of the human U4/U6.U5 tri-snRNP.</title>
        <authorList>
            <person name="Agafonov D.E."/>
            <person name="Kastner B."/>
            <person name="Dybkov O."/>
            <person name="Hofele R.V."/>
            <person name="Liu W.T."/>
            <person name="Urlaub H."/>
            <person name="Luhrmann R."/>
            <person name="Stark H."/>
        </authorList>
    </citation>
    <scope>STRUCTURE BY ELECTRON MICROSCOPY (7.00 ANGSTROMS)</scope>
    <scope>SUBCELLULAR LOCATION</scope>
    <scope>SUBUNIT</scope>
    <scope>IDENTIFICATION BY MASS SPECTROMETRY</scope>
</reference>
<reference evidence="17" key="14">
    <citation type="journal article" date="2017" name="Cell">
        <title>Cryo-EM Structure of a Pre-catalytic Human Spliceosome Primed for Activation.</title>
        <authorList>
            <person name="Bertram K."/>
            <person name="Agafonov D.E."/>
            <person name="Dybkov O."/>
            <person name="Haselbach D."/>
            <person name="Leelaram M.N."/>
            <person name="Will C.L."/>
            <person name="Urlaub H."/>
            <person name="Kastner B."/>
            <person name="Luhrmann R."/>
            <person name="Stark H."/>
        </authorList>
    </citation>
    <scope>STRUCTURE BY ELECTRON MICROSCOPY (4.50 ANGSTROMS)</scope>
    <scope>FUNCTION</scope>
    <scope>SUBCELLULAR LOCATION</scope>
    <scope>SUBUNIT</scope>
    <scope>IDENTIFICATION BY MASS SPECTROMETRY</scope>
</reference>
<reference key="15">
    <citation type="journal article" date="2014" name="Hum. Mol. Genet.">
        <title>PRPF4 mutations cause autosomal dominant retinitis pigmentosa.</title>
        <authorList>
            <person name="Chen X."/>
            <person name="Liu Y."/>
            <person name="Sheng X."/>
            <person name="Tam P.O."/>
            <person name="Zhao K."/>
            <person name="Chen X."/>
            <person name="Rong W."/>
            <person name="Liu Y."/>
            <person name="Liu X."/>
            <person name="Pan X."/>
            <person name="Chen L.J."/>
            <person name="Zhao Q."/>
            <person name="Vollrath D."/>
            <person name="Pang C.P."/>
            <person name="Zhao C."/>
        </authorList>
    </citation>
    <scope>INVOLVEMENT IN RP70</scope>
    <scope>VARIANT RP70 LEU-315</scope>
</reference>
<reference key="16">
    <citation type="journal article" date="2014" name="PLoS ONE">
        <title>Identification of a PRPF4 loss-of-function variant that abrogates U4/U6.U5 tri-snRNP integration and is associated with retinitis pigmentosa.</title>
        <authorList>
            <person name="Linder B."/>
            <person name="Hirmer A."/>
            <person name="Gal A."/>
            <person name="Ruether K."/>
            <person name="Bolz H.J."/>
            <person name="Winkler C."/>
            <person name="Laggerbauer B."/>
            <person name="Fischer U."/>
        </authorList>
    </citation>
    <scope>VARIANT RP70 HIS-192</scope>
    <scope>CHARACTERIZATION OF VARIANT RP70 HIS-192</scope>
    <scope>INTERACTION WITH PRPF3 AND PPIH</scope>
    <scope>MUTAGENESIS OF ARG-192</scope>
    <scope>FUNCTION</scope>
    <scope>SUBCELLULAR LOCATION</scope>
</reference>
<feature type="chain" id="PRO_0000051149" description="U4/U6 small nuclear ribonucleoprotein Prp4">
    <location>
        <begin position="1"/>
        <end position="522"/>
    </location>
</feature>
<feature type="repeat" description="WD 1">
    <location>
        <begin position="229"/>
        <end position="268"/>
    </location>
</feature>
<feature type="repeat" description="WD 2">
    <location>
        <begin position="271"/>
        <end position="318"/>
    </location>
</feature>
<feature type="repeat" description="WD 3">
    <location>
        <begin position="321"/>
        <end position="360"/>
    </location>
</feature>
<feature type="repeat" description="WD 4">
    <location>
        <begin position="363"/>
        <end position="402"/>
    </location>
</feature>
<feature type="repeat" description="WD 5">
    <location>
        <begin position="405"/>
        <end position="444"/>
    </location>
</feature>
<feature type="repeat" description="WD 6">
    <location>
        <begin position="447"/>
        <end position="487"/>
    </location>
</feature>
<feature type="repeat" description="WD 7">
    <location>
        <begin position="490"/>
        <end position="521"/>
    </location>
</feature>
<feature type="region of interest" description="Disordered" evidence="1">
    <location>
        <begin position="1"/>
        <end position="20"/>
    </location>
</feature>
<feature type="compositionally biased region" description="Polar residues" evidence="1">
    <location>
        <begin position="1"/>
        <end position="13"/>
    </location>
</feature>
<feature type="modified residue" description="N6-acetyllysine" evidence="18">
    <location>
        <position position="27"/>
    </location>
</feature>
<feature type="splice variant" id="VSP_006785" description="In isoform 2." evidence="13 14">
    <location>
        <position position="10"/>
    </location>
</feature>
<feature type="sequence variant" id="VAR_074029" description="In RP70; does not affect nuclear speck localization; disrupts interaction with PRPF3; does not affect interaction with PPIH; does not integrated in spliceosomal snRNP complex; dbSNP:rs41296057." evidence="5">
    <original>R</original>
    <variation>H</variation>
    <location>
        <position position="192"/>
    </location>
</feature>
<feature type="sequence variant" id="VAR_071872" description="In RP70; dbSNP:rs587777599." evidence="4">
    <original>P</original>
    <variation>L</variation>
    <location>
        <position position="315"/>
    </location>
</feature>
<feature type="mutagenesis site" description="Decreases PRPF3 binding." evidence="5">
    <original>R</original>
    <variation>E</variation>
    <location>
        <position position="192"/>
    </location>
</feature>
<feature type="mutagenesis site" description="Decreases PRPF3 binding." evidence="5">
    <original>R</original>
    <variation>K</variation>
    <location>
        <position position="192"/>
    </location>
</feature>
<feature type="mutagenesis site" description="Decreases PRPF3 binding." evidence="5">
    <original>R</original>
    <variation>W</variation>
    <location>
        <position position="192"/>
    </location>
</feature>
<feature type="sequence conflict" description="In Ref. 3; AAC02261." evidence="15" ref="3">
    <original>HISERQAEVLAEFERRKRARQINVST</original>
    <variation>ISASDRQKYWLSLREGSEPGRSMFPP</variation>
    <location>
        <begin position="78"/>
        <end position="103"/>
    </location>
</feature>
<feature type="sequence conflict" description="In Ref. 2; AAC51925." evidence="15" ref="2">
    <original>H</original>
    <variation>R</variation>
    <location>
        <position position="78"/>
    </location>
</feature>
<feature type="sequence conflict" description="In Ref. 1; AAB87640." evidence="15" ref="1">
    <original>V</original>
    <variation>L</variation>
    <location>
        <position position="86"/>
    </location>
</feature>
<feature type="sequence conflict" description="In Ref. 1; AAB87640." evidence="15" ref="1">
    <original>R</original>
    <variation>K</variation>
    <location>
        <position position="134"/>
    </location>
</feature>
<feature type="sequence conflict" description="In Ref. 1; AAB87640." evidence="15" ref="1">
    <original>G</original>
    <variation>D</variation>
    <location>
        <position position="141"/>
    </location>
</feature>
<feature type="sequence conflict" description="In Ref. 3; AAC02261." evidence="15" ref="3">
    <location>
        <position position="176"/>
    </location>
</feature>
<feature type="sequence conflict" description="In Ref. 3; AAC02261." evidence="15" ref="3">
    <original>NVGAIVFH</original>
    <variation>KKEQLHSI</variation>
    <location>
        <begin position="275"/>
        <end position="282"/>
    </location>
</feature>
<feature type="sequence conflict" description="In Ref. 1; AAB87640." evidence="15" ref="1">
    <original>G</original>
    <variation>D</variation>
    <location>
        <position position="405"/>
    </location>
</feature>
<feature type="sequence conflict" description="In Ref. 1; AAB87640." evidence="15" ref="1">
    <original>A</original>
    <variation>P</variation>
    <location>
        <position position="447"/>
    </location>
</feature>
<feature type="sequence conflict" description="In Ref. 1; AAB87640." evidence="15" ref="1">
    <original>C</original>
    <variation>Y</variation>
    <location>
        <position position="510"/>
    </location>
</feature>
<feature type="sequence conflict" description="In Ref. 1; AAB87640." evidence="15" ref="1">
    <original>A</original>
    <variation>L</variation>
    <location>
        <position position="521"/>
    </location>
</feature>
<feature type="helix" evidence="20">
    <location>
        <begin position="82"/>
        <end position="96"/>
    </location>
</feature>
<feature type="helix" evidence="19">
    <location>
        <begin position="108"/>
        <end position="114"/>
    </location>
</feature>
<feature type="strand" evidence="19">
    <location>
        <begin position="119"/>
        <end position="121"/>
    </location>
</feature>
<feature type="helix" evidence="19">
    <location>
        <begin position="126"/>
        <end position="136"/>
    </location>
</feature>
<feature type="helix" evidence="20">
    <location>
        <begin position="144"/>
        <end position="151"/>
    </location>
</feature>
<feature type="helix" evidence="20">
    <location>
        <begin position="172"/>
        <end position="201"/>
    </location>
</feature>
<feature type="helix" evidence="20">
    <location>
        <begin position="204"/>
        <end position="219"/>
    </location>
</feature>
<feature type="strand" evidence="20">
    <location>
        <begin position="221"/>
        <end position="228"/>
    </location>
</feature>
<feature type="strand" evidence="20">
    <location>
        <begin position="234"/>
        <end position="239"/>
    </location>
</feature>
<feature type="strand" evidence="20">
    <location>
        <begin position="243"/>
        <end position="250"/>
    </location>
</feature>
<feature type="strand" evidence="20">
    <location>
        <begin position="255"/>
        <end position="259"/>
    </location>
</feature>
<feature type="turn" evidence="20">
    <location>
        <begin position="260"/>
        <end position="262"/>
    </location>
</feature>
<feature type="strand" evidence="20">
    <location>
        <begin position="265"/>
        <end position="269"/>
    </location>
</feature>
<feature type="strand" evidence="20">
    <location>
        <begin position="276"/>
        <end position="281"/>
    </location>
</feature>
<feature type="turn" evidence="20">
    <location>
        <begin position="283"/>
        <end position="287"/>
    </location>
</feature>
<feature type="strand" evidence="20">
    <location>
        <begin position="296"/>
        <end position="300"/>
    </location>
</feature>
<feature type="strand" evidence="20">
    <location>
        <begin position="305"/>
        <end position="308"/>
    </location>
</feature>
<feature type="strand" evidence="20">
    <location>
        <begin position="316"/>
        <end position="319"/>
    </location>
</feature>
<feature type="strand" evidence="20">
    <location>
        <begin position="326"/>
        <end position="331"/>
    </location>
</feature>
<feature type="strand" evidence="20">
    <location>
        <begin position="335"/>
        <end position="342"/>
    </location>
</feature>
<feature type="strand" evidence="20">
    <location>
        <begin position="347"/>
        <end position="351"/>
    </location>
</feature>
<feature type="turn" evidence="20">
    <location>
        <begin position="352"/>
        <end position="354"/>
    </location>
</feature>
<feature type="strand" evidence="20">
    <location>
        <begin position="356"/>
        <end position="361"/>
    </location>
</feature>
<feature type="strand" evidence="20">
    <location>
        <begin position="368"/>
        <end position="373"/>
    </location>
</feature>
<feature type="strand" evidence="20">
    <location>
        <begin position="377"/>
        <end position="384"/>
    </location>
</feature>
<feature type="strand" evidence="20">
    <location>
        <begin position="389"/>
        <end position="393"/>
    </location>
</feature>
<feature type="turn" evidence="20">
    <location>
        <begin position="394"/>
        <end position="397"/>
    </location>
</feature>
<feature type="strand" evidence="20">
    <location>
        <begin position="398"/>
        <end position="402"/>
    </location>
</feature>
<feature type="strand" evidence="20">
    <location>
        <begin position="410"/>
        <end position="415"/>
    </location>
</feature>
<feature type="strand" evidence="20">
    <location>
        <begin position="419"/>
        <end position="426"/>
    </location>
</feature>
<feature type="strand" evidence="20">
    <location>
        <begin position="431"/>
        <end position="435"/>
    </location>
</feature>
<feature type="turn" evidence="20">
    <location>
        <begin position="436"/>
        <end position="439"/>
    </location>
</feature>
<feature type="strand" evidence="20">
    <location>
        <begin position="440"/>
        <end position="445"/>
    </location>
</feature>
<feature type="strand" evidence="20">
    <location>
        <begin position="452"/>
        <end position="457"/>
    </location>
</feature>
<feature type="turn" evidence="20">
    <location>
        <begin position="459"/>
        <end position="461"/>
    </location>
</feature>
<feature type="strand" evidence="20">
    <location>
        <begin position="464"/>
        <end position="469"/>
    </location>
</feature>
<feature type="strand" evidence="20">
    <location>
        <begin position="472"/>
        <end position="478"/>
    </location>
</feature>
<feature type="turn" evidence="20">
    <location>
        <begin position="479"/>
        <end position="481"/>
    </location>
</feature>
<feature type="strand" evidence="20">
    <location>
        <begin position="484"/>
        <end position="489"/>
    </location>
</feature>
<feature type="strand" evidence="20">
    <location>
        <begin position="495"/>
        <end position="500"/>
    </location>
</feature>
<feature type="strand" evidence="20">
    <location>
        <begin position="504"/>
        <end position="511"/>
    </location>
</feature>
<feature type="strand" evidence="20">
    <location>
        <begin position="514"/>
        <end position="521"/>
    </location>
</feature>
<evidence type="ECO:0000256" key="1">
    <source>
        <dbReference type="SAM" id="MobiDB-lite"/>
    </source>
</evidence>
<evidence type="ECO:0000269" key="2">
    <source>
    </source>
</evidence>
<evidence type="ECO:0000269" key="3">
    <source>
    </source>
</evidence>
<evidence type="ECO:0000269" key="4">
    <source>
    </source>
</evidence>
<evidence type="ECO:0000269" key="5">
    <source>
    </source>
</evidence>
<evidence type="ECO:0000269" key="6">
    <source>
    </source>
</evidence>
<evidence type="ECO:0000269" key="7">
    <source>
    </source>
</evidence>
<evidence type="ECO:0000269" key="8">
    <source>
    </source>
</evidence>
<evidence type="ECO:0000269" key="9">
    <source>
    </source>
</evidence>
<evidence type="ECO:0000269" key="10">
    <source>
    </source>
</evidence>
<evidence type="ECO:0000269" key="11">
    <source>
    </source>
</evidence>
<evidence type="ECO:0000269" key="12">
    <source>
    </source>
</evidence>
<evidence type="ECO:0000303" key="13">
    <source>
    </source>
</evidence>
<evidence type="ECO:0000303" key="14">
    <source>
    </source>
</evidence>
<evidence type="ECO:0000305" key="15"/>
<evidence type="ECO:0007744" key="16">
    <source>
        <dbReference type="PDB" id="3JCR"/>
    </source>
</evidence>
<evidence type="ECO:0007744" key="17">
    <source>
        <dbReference type="PDB" id="5O9Z"/>
    </source>
</evidence>
<evidence type="ECO:0007744" key="18">
    <source>
    </source>
</evidence>
<evidence type="ECO:0007829" key="19">
    <source>
        <dbReference type="PDB" id="1MZW"/>
    </source>
</evidence>
<evidence type="ECO:0007829" key="20">
    <source>
        <dbReference type="PDB" id="8Q7N"/>
    </source>
</evidence>
<dbReference type="EMBL" id="AF001687">
    <property type="protein sequence ID" value="AAB87640.1"/>
    <property type="molecule type" value="Genomic_DNA"/>
</dbReference>
<dbReference type="EMBL" id="AF016369">
    <property type="protein sequence ID" value="AAC51925.1"/>
    <property type="molecule type" value="mRNA"/>
</dbReference>
<dbReference type="EMBL" id="U82756">
    <property type="protein sequence ID" value="AAC02261.1"/>
    <property type="molecule type" value="mRNA"/>
</dbReference>
<dbReference type="EMBL" id="AL449305">
    <property type="status" value="NOT_ANNOTATED_CDS"/>
    <property type="molecule type" value="Genomic_DNA"/>
</dbReference>
<dbReference type="EMBL" id="CH471090">
    <property type="protein sequence ID" value="EAW87362.1"/>
    <property type="molecule type" value="Genomic_DNA"/>
</dbReference>
<dbReference type="EMBL" id="BC001588">
    <property type="protein sequence ID" value="AAH01588.1"/>
    <property type="molecule type" value="mRNA"/>
</dbReference>
<dbReference type="EMBL" id="BC007424">
    <property type="protein sequence ID" value="AAH07424.1"/>
    <property type="molecule type" value="mRNA"/>
</dbReference>
<dbReference type="CCDS" id="CCDS59142.1">
    <molecule id="O43172-2"/>
</dbReference>
<dbReference type="CCDS" id="CCDS6791.1">
    <molecule id="O43172-1"/>
</dbReference>
<dbReference type="RefSeq" id="NP_001231855.1">
    <molecule id="O43172-2"/>
    <property type="nucleotide sequence ID" value="NM_001244926.2"/>
</dbReference>
<dbReference type="RefSeq" id="NP_004688.2">
    <molecule id="O43172-1"/>
    <property type="nucleotide sequence ID" value="NM_004697.4"/>
</dbReference>
<dbReference type="PDB" id="1MZW">
    <property type="method" value="X-ray"/>
    <property type="resolution" value="2.00 A"/>
    <property type="chains" value="B=107-137"/>
</dbReference>
<dbReference type="PDB" id="3JCR">
    <property type="method" value="EM"/>
    <property type="resolution" value="7.00 A"/>
    <property type="chains" value="L=1-522"/>
</dbReference>
<dbReference type="PDB" id="5O9Z">
    <property type="method" value="EM"/>
    <property type="resolution" value="4.50 A"/>
    <property type="chains" value="F=1-522"/>
</dbReference>
<dbReference type="PDB" id="6AH0">
    <property type="method" value="EM"/>
    <property type="resolution" value="5.70 A"/>
    <property type="chains" value="K=1-522"/>
</dbReference>
<dbReference type="PDB" id="6AHD">
    <property type="method" value="EM"/>
    <property type="resolution" value="3.80 A"/>
    <property type="chains" value="7=421-443"/>
</dbReference>
<dbReference type="PDB" id="6QW6">
    <property type="method" value="EM"/>
    <property type="resolution" value="2.92 A"/>
    <property type="chains" value="4B=1-522"/>
</dbReference>
<dbReference type="PDB" id="6QX9">
    <property type="method" value="EM"/>
    <property type="resolution" value="3.28 A"/>
    <property type="chains" value="4B=1-522"/>
</dbReference>
<dbReference type="PDB" id="8H6E">
    <property type="method" value="EM"/>
    <property type="resolution" value="3.20 A"/>
    <property type="chains" value="4C=1-522"/>
</dbReference>
<dbReference type="PDB" id="8H6J">
    <property type="method" value="EM"/>
    <property type="resolution" value="3.25 A"/>
    <property type="chains" value="4C=1-522"/>
</dbReference>
<dbReference type="PDB" id="8H6K">
    <property type="method" value="EM"/>
    <property type="resolution" value="2.70 A"/>
    <property type="chains" value="4C=1-522"/>
</dbReference>
<dbReference type="PDB" id="8H6L">
    <property type="method" value="EM"/>
    <property type="resolution" value="2.60 A"/>
    <property type="chains" value="4C=1-522"/>
</dbReference>
<dbReference type="PDB" id="8Q7N">
    <property type="method" value="EM"/>
    <property type="resolution" value="3.10 A"/>
    <property type="chains" value="F=1-522"/>
</dbReference>
<dbReference type="PDB" id="8QO9">
    <property type="method" value="EM"/>
    <property type="resolution" value="5.29 A"/>
    <property type="chains" value="F=1-522"/>
</dbReference>
<dbReference type="PDB" id="8QOZ">
    <property type="method" value="EM"/>
    <property type="resolution" value="3.10 A"/>
    <property type="chains" value="F=1-522"/>
</dbReference>
<dbReference type="PDB" id="8QPA">
    <property type="method" value="EM"/>
    <property type="resolution" value="3.70 A"/>
    <property type="chains" value="F=1-522"/>
</dbReference>
<dbReference type="PDB" id="8QPB">
    <property type="method" value="EM"/>
    <property type="resolution" value="3.70 A"/>
    <property type="chains" value="F=1-522"/>
</dbReference>
<dbReference type="PDB" id="8QPE">
    <property type="method" value="EM"/>
    <property type="resolution" value="3.10 A"/>
    <property type="chains" value="F=1-522"/>
</dbReference>
<dbReference type="PDB" id="8QXD">
    <property type="method" value="EM"/>
    <property type="resolution" value="9.60 A"/>
    <property type="chains" value="F=1-522"/>
</dbReference>
<dbReference type="PDB" id="8QZS">
    <property type="method" value="EM"/>
    <property type="resolution" value="4.10 A"/>
    <property type="chains" value="F=1-522"/>
</dbReference>
<dbReference type="PDB" id="8R08">
    <property type="method" value="EM"/>
    <property type="resolution" value="6.10 A"/>
    <property type="chains" value="4B=1-522"/>
</dbReference>
<dbReference type="PDB" id="8R09">
    <property type="method" value="EM"/>
    <property type="resolution" value="4.30 A"/>
    <property type="chains" value="F=1-522"/>
</dbReference>
<dbReference type="PDB" id="8R0A">
    <property type="method" value="EM"/>
    <property type="resolution" value="5.80 A"/>
    <property type="chains" value="F=1-522"/>
</dbReference>
<dbReference type="PDB" id="8R0B">
    <property type="method" value="EM"/>
    <property type="resolution" value="4.40 A"/>
    <property type="chains" value="F=1-522"/>
</dbReference>
<dbReference type="PDB" id="8RM5">
    <property type="method" value="EM"/>
    <property type="resolution" value="6.90 A"/>
    <property type="chains" value="F=1-522"/>
</dbReference>
<dbReference type="PDB" id="8Y6O">
    <property type="method" value="EM"/>
    <property type="resolution" value="3.38 A"/>
    <property type="chains" value="M=1-522"/>
</dbReference>
<dbReference type="PDBsum" id="1MZW"/>
<dbReference type="PDBsum" id="3JCR"/>
<dbReference type="PDBsum" id="5O9Z"/>
<dbReference type="PDBsum" id="6AH0"/>
<dbReference type="PDBsum" id="6AHD"/>
<dbReference type="PDBsum" id="6QW6"/>
<dbReference type="PDBsum" id="6QX9"/>
<dbReference type="PDBsum" id="8H6E"/>
<dbReference type="PDBsum" id="8H6J"/>
<dbReference type="PDBsum" id="8H6K"/>
<dbReference type="PDBsum" id="8H6L"/>
<dbReference type="PDBsum" id="8Q7N"/>
<dbReference type="PDBsum" id="8QO9"/>
<dbReference type="PDBsum" id="8QOZ"/>
<dbReference type="PDBsum" id="8QPA"/>
<dbReference type="PDBsum" id="8QPB"/>
<dbReference type="PDBsum" id="8QPE"/>
<dbReference type="PDBsum" id="8QXD"/>
<dbReference type="PDBsum" id="8QZS"/>
<dbReference type="PDBsum" id="8R08"/>
<dbReference type="PDBsum" id="8R09"/>
<dbReference type="PDBsum" id="8R0A"/>
<dbReference type="PDBsum" id="8R0B"/>
<dbReference type="PDBsum" id="8RM5"/>
<dbReference type="PDBsum" id="8Y6O"/>
<dbReference type="EMDB" id="EMD-18225"/>
<dbReference type="EMDB" id="EMD-18529"/>
<dbReference type="EMDB" id="EMD-18542"/>
<dbReference type="EMDB" id="EMD-18546"/>
<dbReference type="EMDB" id="EMD-18547"/>
<dbReference type="EMDB" id="EMD-18548"/>
<dbReference type="EMDB" id="EMD-18718"/>
<dbReference type="EMDB" id="EMD-18781"/>
<dbReference type="EMDB" id="EMD-18786"/>
<dbReference type="EMDB" id="EMD-18787"/>
<dbReference type="EMDB" id="EMD-18788"/>
<dbReference type="EMDB" id="EMD-18789"/>
<dbReference type="EMDB" id="EMD-19349"/>
<dbReference type="EMDB" id="EMD-34500"/>
<dbReference type="EMDB" id="EMD-34505"/>
<dbReference type="EMDB" id="EMD-34507"/>
<dbReference type="EMDB" id="EMD-34508"/>
<dbReference type="EMDB" id="EMD-3766"/>
<dbReference type="EMDB" id="EMD-38993"/>
<dbReference type="EMDB" id="EMD-4658"/>
<dbReference type="EMDB" id="EMD-4665"/>
<dbReference type="EMDB" id="EMD-9621"/>
<dbReference type="EMDB" id="EMD-9624"/>
<dbReference type="SMR" id="O43172"/>
<dbReference type="BioGRID" id="114576">
    <property type="interactions" value="291"/>
</dbReference>
<dbReference type="ComplexPortal" id="CPX-2391">
    <property type="entry name" value="U4/U6.U5 small nuclear ribonucleoprotein complex"/>
</dbReference>
<dbReference type="CORUM" id="O43172"/>
<dbReference type="FunCoup" id="O43172">
    <property type="interactions" value="3510"/>
</dbReference>
<dbReference type="IntAct" id="O43172">
    <property type="interactions" value="137"/>
</dbReference>
<dbReference type="MINT" id="O43172"/>
<dbReference type="STRING" id="9606.ENSP00000363313"/>
<dbReference type="BindingDB" id="O43172"/>
<dbReference type="DrugCentral" id="O43172"/>
<dbReference type="GlyGen" id="O43172">
    <property type="glycosylation" value="2 sites, 1 N-linked glycan (1 site), 1 O-linked glycan (1 site)"/>
</dbReference>
<dbReference type="iPTMnet" id="O43172"/>
<dbReference type="PhosphoSitePlus" id="O43172"/>
<dbReference type="SwissPalm" id="O43172"/>
<dbReference type="BioMuta" id="PRPF4"/>
<dbReference type="jPOST" id="O43172"/>
<dbReference type="MassIVE" id="O43172"/>
<dbReference type="PaxDb" id="9606-ENSP00000363313"/>
<dbReference type="PeptideAtlas" id="O43172"/>
<dbReference type="ProteomicsDB" id="48788">
    <molecule id="O43172-1"/>
</dbReference>
<dbReference type="ProteomicsDB" id="48789">
    <molecule id="O43172-2"/>
</dbReference>
<dbReference type="Pumba" id="O43172"/>
<dbReference type="Antibodypedia" id="15276">
    <property type="antibodies" value="139 antibodies from 25 providers"/>
</dbReference>
<dbReference type="DNASU" id="9128"/>
<dbReference type="Ensembl" id="ENST00000374198.5">
    <molecule id="O43172-2"/>
    <property type="protein sequence ID" value="ENSP00000363313.4"/>
    <property type="gene ID" value="ENSG00000136875.13"/>
</dbReference>
<dbReference type="Ensembl" id="ENST00000374199.9">
    <molecule id="O43172-1"/>
    <property type="protein sequence ID" value="ENSP00000363315.4"/>
    <property type="gene ID" value="ENSG00000136875.13"/>
</dbReference>
<dbReference type="GeneID" id="9128"/>
<dbReference type="KEGG" id="hsa:9128"/>
<dbReference type="MANE-Select" id="ENST00000374198.5">
    <molecule id="O43172-2"/>
    <property type="protein sequence ID" value="ENSP00000363313.4"/>
    <property type="RefSeq nucleotide sequence ID" value="NM_001244926.2"/>
    <property type="RefSeq protein sequence ID" value="NP_001231855.1"/>
</dbReference>
<dbReference type="UCSC" id="uc004bgx.4">
    <molecule id="O43172-1"/>
    <property type="organism name" value="human"/>
</dbReference>
<dbReference type="AGR" id="HGNC:17349"/>
<dbReference type="CTD" id="9128"/>
<dbReference type="DisGeNET" id="9128"/>
<dbReference type="GeneCards" id="PRPF4"/>
<dbReference type="HGNC" id="HGNC:17349">
    <property type="gene designation" value="PRPF4"/>
</dbReference>
<dbReference type="HPA" id="ENSG00000136875">
    <property type="expression patterns" value="Low tissue specificity"/>
</dbReference>
<dbReference type="MalaCards" id="PRPF4"/>
<dbReference type="MIM" id="607795">
    <property type="type" value="gene"/>
</dbReference>
<dbReference type="MIM" id="615922">
    <property type="type" value="phenotype"/>
</dbReference>
<dbReference type="neXtProt" id="NX_O43172"/>
<dbReference type="OpenTargets" id="ENSG00000136875"/>
<dbReference type="Orphanet" id="791">
    <property type="disease" value="Retinitis pigmentosa"/>
</dbReference>
<dbReference type="PharmGKB" id="PA38448"/>
<dbReference type="VEuPathDB" id="HostDB:ENSG00000136875"/>
<dbReference type="eggNOG" id="KOG0272">
    <property type="taxonomic scope" value="Eukaryota"/>
</dbReference>
<dbReference type="GeneTree" id="ENSGT00940000156006"/>
<dbReference type="HOGENOM" id="CLU_000288_57_20_1"/>
<dbReference type="InParanoid" id="O43172"/>
<dbReference type="OMA" id="LNEPICY"/>
<dbReference type="OrthoDB" id="540662at2759"/>
<dbReference type="PAN-GO" id="O43172">
    <property type="GO annotations" value="4 GO annotations based on evolutionary models"/>
</dbReference>
<dbReference type="PhylomeDB" id="O43172"/>
<dbReference type="TreeFam" id="TF314922"/>
<dbReference type="PathwayCommons" id="O43172"/>
<dbReference type="Reactome" id="R-HSA-72163">
    <property type="pathway name" value="mRNA Splicing - Major Pathway"/>
</dbReference>
<dbReference type="SignaLink" id="O43172"/>
<dbReference type="SIGNOR" id="O43172"/>
<dbReference type="BioGRID-ORCS" id="9128">
    <property type="hits" value="792 hits in 1162 CRISPR screens"/>
</dbReference>
<dbReference type="CD-CODE" id="91857CE7">
    <property type="entry name" value="Nucleolus"/>
</dbReference>
<dbReference type="EvolutionaryTrace" id="O43172"/>
<dbReference type="GeneWiki" id="PRPF4"/>
<dbReference type="GenomeRNAi" id="9128"/>
<dbReference type="Pharos" id="O43172">
    <property type="development level" value="Tchem"/>
</dbReference>
<dbReference type="PRO" id="PR:O43172"/>
<dbReference type="Proteomes" id="UP000005640">
    <property type="component" value="Chromosome 9"/>
</dbReference>
<dbReference type="RNAct" id="O43172">
    <property type="molecule type" value="protein"/>
</dbReference>
<dbReference type="Bgee" id="ENSG00000136875">
    <property type="expression patterns" value="Expressed in secondary oocyte and 202 other cell types or tissues"/>
</dbReference>
<dbReference type="ExpressionAtlas" id="O43172">
    <property type="expression patterns" value="baseline and differential"/>
</dbReference>
<dbReference type="GO" id="GO:0015030">
    <property type="term" value="C:Cajal body"/>
    <property type="evidence" value="ECO:0000314"/>
    <property type="project" value="BHF-UCL"/>
</dbReference>
<dbReference type="GO" id="GO:0016607">
    <property type="term" value="C:nuclear speck"/>
    <property type="evidence" value="ECO:0000314"/>
    <property type="project" value="HPA"/>
</dbReference>
<dbReference type="GO" id="GO:0005654">
    <property type="term" value="C:nucleoplasm"/>
    <property type="evidence" value="ECO:0000304"/>
    <property type="project" value="Reactome"/>
</dbReference>
<dbReference type="GO" id="GO:0005634">
    <property type="term" value="C:nucleus"/>
    <property type="evidence" value="ECO:0000314"/>
    <property type="project" value="UniProtKB"/>
</dbReference>
<dbReference type="GO" id="GO:0005681">
    <property type="term" value="C:spliceosomal complex"/>
    <property type="evidence" value="ECO:0000303"/>
    <property type="project" value="UniProtKB"/>
</dbReference>
<dbReference type="GO" id="GO:0097525">
    <property type="term" value="C:spliceosomal snRNP complex"/>
    <property type="evidence" value="ECO:0000314"/>
    <property type="project" value="UniProtKB"/>
</dbReference>
<dbReference type="GO" id="GO:0071005">
    <property type="term" value="C:U2-type precatalytic spliceosome"/>
    <property type="evidence" value="ECO:0000314"/>
    <property type="project" value="UniProtKB"/>
</dbReference>
<dbReference type="GO" id="GO:0071001">
    <property type="term" value="C:U4/U6 snRNP"/>
    <property type="evidence" value="ECO:0000314"/>
    <property type="project" value="UniProtKB"/>
</dbReference>
<dbReference type="GO" id="GO:0046540">
    <property type="term" value="C:U4/U6 x U5 tri-snRNP complex"/>
    <property type="evidence" value="ECO:0000314"/>
    <property type="project" value="CAFA"/>
</dbReference>
<dbReference type="GO" id="GO:0030621">
    <property type="term" value="F:U4 snRNA binding"/>
    <property type="evidence" value="ECO:0000318"/>
    <property type="project" value="GO_Central"/>
</dbReference>
<dbReference type="GO" id="GO:0017070">
    <property type="term" value="F:U6 snRNA binding"/>
    <property type="evidence" value="ECO:0000318"/>
    <property type="project" value="GO_Central"/>
</dbReference>
<dbReference type="GO" id="GO:0000398">
    <property type="term" value="P:mRNA splicing, via spliceosome"/>
    <property type="evidence" value="ECO:0000314"/>
    <property type="project" value="UniProtKB"/>
</dbReference>
<dbReference type="GO" id="GO:0006396">
    <property type="term" value="P:RNA processing"/>
    <property type="evidence" value="ECO:0000304"/>
    <property type="project" value="ProtInc"/>
</dbReference>
<dbReference type="GO" id="GO:0008380">
    <property type="term" value="P:RNA splicing"/>
    <property type="evidence" value="ECO:0000304"/>
    <property type="project" value="ProtInc"/>
</dbReference>
<dbReference type="GO" id="GO:0000375">
    <property type="term" value="P:RNA splicing, via transesterification reactions"/>
    <property type="evidence" value="ECO:0000303"/>
    <property type="project" value="UniProtKB"/>
</dbReference>
<dbReference type="CDD" id="cd00200">
    <property type="entry name" value="WD40"/>
    <property type="match status" value="1"/>
</dbReference>
<dbReference type="DisProt" id="DP01751"/>
<dbReference type="FunFam" id="2.130.10.10:FF:000147">
    <property type="entry name" value="U4/U6 small nuclear ribonucleoprotein Prp4"/>
    <property type="match status" value="1"/>
</dbReference>
<dbReference type="FunFam" id="2.130.10.10:FF:000356">
    <property type="entry name" value="U4/U6 small nuclear ribonucleoprotein Prp4"/>
    <property type="match status" value="1"/>
</dbReference>
<dbReference type="FunFam" id="4.10.280.110:FF:000002">
    <property type="entry name" value="U4/U6 small nuclear ribonucleoprotein Prp4"/>
    <property type="match status" value="1"/>
</dbReference>
<dbReference type="FunFam" id="2.130.10.10:FF:000113">
    <property type="entry name" value="U4/U6 small nuclear ribonucleoprotein Prp4 isoform X1"/>
    <property type="match status" value="1"/>
</dbReference>
<dbReference type="Gene3D" id="4.10.280.110">
    <property type="entry name" value="Pre-mRNA processing factor 4 domain"/>
    <property type="match status" value="1"/>
</dbReference>
<dbReference type="Gene3D" id="2.130.10.10">
    <property type="entry name" value="YVTN repeat-like/Quinoprotein amine dehydrogenase"/>
    <property type="match status" value="3"/>
</dbReference>
<dbReference type="InterPro" id="IPR020472">
    <property type="entry name" value="G-protein_beta_WD-40_rep"/>
</dbReference>
<dbReference type="InterPro" id="IPR014906">
    <property type="entry name" value="PRP4-like"/>
</dbReference>
<dbReference type="InterPro" id="IPR036285">
    <property type="entry name" value="PRP4-like_sf"/>
</dbReference>
<dbReference type="InterPro" id="IPR015943">
    <property type="entry name" value="WD40/YVTN_repeat-like_dom_sf"/>
</dbReference>
<dbReference type="InterPro" id="IPR019775">
    <property type="entry name" value="WD40_repeat_CS"/>
</dbReference>
<dbReference type="InterPro" id="IPR036322">
    <property type="entry name" value="WD40_repeat_dom_sf"/>
</dbReference>
<dbReference type="InterPro" id="IPR001680">
    <property type="entry name" value="WD40_rpt"/>
</dbReference>
<dbReference type="PANTHER" id="PTHR19846:SF5">
    <property type="entry name" value="U4_U6 SMALL NUCLEAR RIBONUCLEOPROTEIN PRP4"/>
    <property type="match status" value="1"/>
</dbReference>
<dbReference type="PANTHER" id="PTHR19846">
    <property type="entry name" value="WD40 REPEAT PROTEIN"/>
    <property type="match status" value="1"/>
</dbReference>
<dbReference type="Pfam" id="PF08799">
    <property type="entry name" value="PRP4"/>
    <property type="match status" value="1"/>
</dbReference>
<dbReference type="Pfam" id="PF00400">
    <property type="entry name" value="WD40"/>
    <property type="match status" value="7"/>
</dbReference>
<dbReference type="PRINTS" id="PR00320">
    <property type="entry name" value="GPROTEINBRPT"/>
</dbReference>
<dbReference type="SMART" id="SM00500">
    <property type="entry name" value="SFM"/>
    <property type="match status" value="1"/>
</dbReference>
<dbReference type="SMART" id="SM00320">
    <property type="entry name" value="WD40"/>
    <property type="match status" value="7"/>
</dbReference>
<dbReference type="SUPFAM" id="SSF158230">
    <property type="entry name" value="PRP4-like"/>
    <property type="match status" value="1"/>
</dbReference>
<dbReference type="SUPFAM" id="SSF50978">
    <property type="entry name" value="WD40 repeat-like"/>
    <property type="match status" value="1"/>
</dbReference>
<dbReference type="PROSITE" id="PS00678">
    <property type="entry name" value="WD_REPEATS_1"/>
    <property type="match status" value="2"/>
</dbReference>
<dbReference type="PROSITE" id="PS50082">
    <property type="entry name" value="WD_REPEATS_2"/>
    <property type="match status" value="6"/>
</dbReference>
<dbReference type="PROSITE" id="PS50294">
    <property type="entry name" value="WD_REPEATS_REGION"/>
    <property type="match status" value="1"/>
</dbReference>
<protein>
    <recommendedName>
        <fullName>U4/U6 small nuclear ribonucleoprotein Prp4</fullName>
    </recommendedName>
    <alternativeName>
        <fullName>PRP4 homolog</fullName>
        <shortName>hPrp4</shortName>
    </alternativeName>
    <alternativeName>
        <fullName>U4/U6 snRNP 60 kDa protein</fullName>
    </alternativeName>
    <alternativeName>
        <fullName>WD splicing factor Prp4</fullName>
    </alternativeName>
</protein>